<keyword id="KW-0028">Amino-acid biosynthesis</keyword>
<keyword id="KW-0963">Cytoplasm</keyword>
<keyword id="KW-0413">Isomerase</keyword>
<keyword id="KW-0457">Lysine biosynthesis</keyword>
<keyword id="KW-1185">Reference proteome</keyword>
<gene>
    <name evidence="1" type="primary">dapF</name>
    <name type="ordered locus">LSL_0856</name>
</gene>
<protein>
    <recommendedName>
        <fullName evidence="1">Diaminopimelate epimerase</fullName>
        <shortName evidence="1">DAP epimerase</shortName>
        <ecNumber evidence="1">5.1.1.7</ecNumber>
    </recommendedName>
    <alternativeName>
        <fullName evidence="1">PLP-independent amino acid racemase</fullName>
    </alternativeName>
</protein>
<evidence type="ECO:0000255" key="1">
    <source>
        <dbReference type="HAMAP-Rule" id="MF_00197"/>
    </source>
</evidence>
<feature type="chain" id="PRO_1000011892" description="Diaminopimelate epimerase">
    <location>
        <begin position="1"/>
        <end position="325"/>
    </location>
</feature>
<feature type="active site" description="Proton donor" evidence="1">
    <location>
        <position position="78"/>
    </location>
</feature>
<feature type="active site" description="Proton acceptor" evidence="1">
    <location>
        <position position="230"/>
    </location>
</feature>
<feature type="binding site" evidence="1">
    <location>
        <position position="11"/>
    </location>
    <ligand>
        <name>substrate</name>
    </ligand>
</feature>
<feature type="binding site" evidence="1">
    <location>
        <position position="69"/>
    </location>
    <ligand>
        <name>substrate</name>
    </ligand>
</feature>
<feature type="binding site" evidence="1">
    <location>
        <begin position="79"/>
        <end position="80"/>
    </location>
    <ligand>
        <name>substrate</name>
    </ligand>
</feature>
<feature type="binding site" evidence="1">
    <location>
        <position position="166"/>
    </location>
    <ligand>
        <name>substrate</name>
    </ligand>
</feature>
<feature type="binding site" evidence="1">
    <location>
        <position position="203"/>
    </location>
    <ligand>
        <name>substrate</name>
    </ligand>
</feature>
<feature type="binding site" evidence="1">
    <location>
        <begin position="221"/>
        <end position="222"/>
    </location>
    <ligand>
        <name>substrate</name>
    </ligand>
</feature>
<feature type="binding site" evidence="1">
    <location>
        <begin position="231"/>
        <end position="232"/>
    </location>
    <ligand>
        <name>substrate</name>
    </ligand>
</feature>
<feature type="site" description="Could be important to modulate the pK values of the two catalytic cysteine residues" evidence="1">
    <location>
        <position position="168"/>
    </location>
</feature>
<feature type="site" description="Could be important to modulate the pK values of the two catalytic cysteine residues" evidence="1">
    <location>
        <position position="221"/>
    </location>
</feature>
<comment type="function">
    <text evidence="1">Catalyzes the stereoinversion of LL-2,6-diaminopimelate (L,L-DAP) to meso-diaminopimelate (meso-DAP), a precursor of L-lysine and an essential component of the bacterial peptidoglycan.</text>
</comment>
<comment type="catalytic activity">
    <reaction evidence="1">
        <text>(2S,6S)-2,6-diaminopimelate = meso-2,6-diaminopimelate</text>
        <dbReference type="Rhea" id="RHEA:15393"/>
        <dbReference type="ChEBI" id="CHEBI:57609"/>
        <dbReference type="ChEBI" id="CHEBI:57791"/>
        <dbReference type="EC" id="5.1.1.7"/>
    </reaction>
</comment>
<comment type="pathway">
    <text evidence="1">Amino-acid biosynthesis; L-lysine biosynthesis via DAP pathway; DL-2,6-diaminopimelate from LL-2,6-diaminopimelate: step 1/1.</text>
</comment>
<comment type="subunit">
    <text evidence="1">Homodimer.</text>
</comment>
<comment type="subcellular location">
    <subcellularLocation>
        <location evidence="1">Cytoplasm</location>
    </subcellularLocation>
</comment>
<comment type="similarity">
    <text evidence="1">Belongs to the diaminopimelate epimerase family.</text>
</comment>
<accession>Q1WTU5</accession>
<proteinExistence type="inferred from homology"/>
<sequence>MEMLKVHGSGNDFFILDEDNLEEPLTEEELIQLAQKVCDRDTGLHGGADGVLYVQAGHEGTDGRMRVINADGSEASMCGNGIRTVARYLSEKKNLAEFKIQTMHADLEVKKADKLAEKVPAFDAEISPVSFDAQDLLMHVGKEKLIDDYIPELSKAIKFSAVAVPNPHLIAFVDHETLMGEELGRIASYLNNGNNPIFPDGVNVSFVEILEPGKIFVRTFERGVGFTNACGTAMSASSLMYVLLHSDQIDFEKLITVINPGGMVRTMVHKRENGDYWMSLIGNATEVAKVNISQADAINGNFDNFTWNETGEQAAYEAFIAQLHR</sequence>
<reference key="1">
    <citation type="journal article" date="2006" name="Proc. Natl. Acad. Sci. U.S.A.">
        <title>Multireplicon genome architecture of Lactobacillus salivarius.</title>
        <authorList>
            <person name="Claesson M.J."/>
            <person name="Li Y."/>
            <person name="Leahy S."/>
            <person name="Canchaya C."/>
            <person name="van Pijkeren J.P."/>
            <person name="Cerdeno-Tarraga A.M."/>
            <person name="Parkhill J."/>
            <person name="Flynn S."/>
            <person name="O'Sullivan G.C."/>
            <person name="Collins J.K."/>
            <person name="Higgins D."/>
            <person name="Shanahan F."/>
            <person name="Fitzgerald G.F."/>
            <person name="van Sinderen D."/>
            <person name="O'Toole P.W."/>
        </authorList>
    </citation>
    <scope>NUCLEOTIDE SEQUENCE [LARGE SCALE GENOMIC DNA]</scope>
    <source>
        <strain>UCC118</strain>
    </source>
</reference>
<name>DAPF_LIGS1</name>
<organism>
    <name type="scientific">Ligilactobacillus salivarius (strain UCC118)</name>
    <name type="common">Lactobacillus salivarius</name>
    <dbReference type="NCBI Taxonomy" id="362948"/>
    <lineage>
        <taxon>Bacteria</taxon>
        <taxon>Bacillati</taxon>
        <taxon>Bacillota</taxon>
        <taxon>Bacilli</taxon>
        <taxon>Lactobacillales</taxon>
        <taxon>Lactobacillaceae</taxon>
        <taxon>Ligilactobacillus</taxon>
    </lineage>
</organism>
<dbReference type="EC" id="5.1.1.7" evidence="1"/>
<dbReference type="EMBL" id="CP000233">
    <property type="protein sequence ID" value="ABD99666.1"/>
    <property type="molecule type" value="Genomic_DNA"/>
</dbReference>
<dbReference type="RefSeq" id="WP_003704372.1">
    <property type="nucleotide sequence ID" value="NC_007929.1"/>
</dbReference>
<dbReference type="RefSeq" id="YP_535749.1">
    <property type="nucleotide sequence ID" value="NC_007929.1"/>
</dbReference>
<dbReference type="SMR" id="Q1WTU5"/>
<dbReference type="STRING" id="362948.LSL_0856"/>
<dbReference type="KEGG" id="lsl:LSL_0856"/>
<dbReference type="PATRIC" id="fig|362948.14.peg.931"/>
<dbReference type="HOGENOM" id="CLU_053306_3_1_9"/>
<dbReference type="OrthoDB" id="9805408at2"/>
<dbReference type="UniPathway" id="UPA00034">
    <property type="reaction ID" value="UER00025"/>
</dbReference>
<dbReference type="Proteomes" id="UP000006559">
    <property type="component" value="Chromosome"/>
</dbReference>
<dbReference type="GO" id="GO:0005829">
    <property type="term" value="C:cytosol"/>
    <property type="evidence" value="ECO:0007669"/>
    <property type="project" value="TreeGrafter"/>
</dbReference>
<dbReference type="GO" id="GO:0008837">
    <property type="term" value="F:diaminopimelate epimerase activity"/>
    <property type="evidence" value="ECO:0007669"/>
    <property type="project" value="UniProtKB-UniRule"/>
</dbReference>
<dbReference type="GO" id="GO:0009089">
    <property type="term" value="P:lysine biosynthetic process via diaminopimelate"/>
    <property type="evidence" value="ECO:0007669"/>
    <property type="project" value="UniProtKB-UniRule"/>
</dbReference>
<dbReference type="Gene3D" id="3.10.310.10">
    <property type="entry name" value="Diaminopimelate Epimerase, Chain A, domain 1"/>
    <property type="match status" value="2"/>
</dbReference>
<dbReference type="HAMAP" id="MF_00197">
    <property type="entry name" value="DAP_epimerase"/>
    <property type="match status" value="1"/>
</dbReference>
<dbReference type="InterPro" id="IPR018510">
    <property type="entry name" value="DAP_epimerase_AS"/>
</dbReference>
<dbReference type="InterPro" id="IPR001653">
    <property type="entry name" value="DAP_epimerase_DapF"/>
</dbReference>
<dbReference type="NCBIfam" id="TIGR00652">
    <property type="entry name" value="DapF"/>
    <property type="match status" value="1"/>
</dbReference>
<dbReference type="PANTHER" id="PTHR31689:SF0">
    <property type="entry name" value="DIAMINOPIMELATE EPIMERASE"/>
    <property type="match status" value="1"/>
</dbReference>
<dbReference type="PANTHER" id="PTHR31689">
    <property type="entry name" value="DIAMINOPIMELATE EPIMERASE, CHLOROPLASTIC"/>
    <property type="match status" value="1"/>
</dbReference>
<dbReference type="Pfam" id="PF01678">
    <property type="entry name" value="DAP_epimerase"/>
    <property type="match status" value="2"/>
</dbReference>
<dbReference type="SUPFAM" id="SSF54506">
    <property type="entry name" value="Diaminopimelate epimerase-like"/>
    <property type="match status" value="2"/>
</dbReference>
<dbReference type="PROSITE" id="PS01326">
    <property type="entry name" value="DAP_EPIMERASE"/>
    <property type="match status" value="1"/>
</dbReference>